<accession>Q99RX4</accession>
<comment type="function">
    <text evidence="1">Not known; immunogenic protein.</text>
</comment>
<comment type="subcellular location">
    <subcellularLocation>
        <location evidence="1">Secreted</location>
    </subcellularLocation>
</comment>
<name>SSAA2_STAAM</name>
<sequence length="267" mass="29327">MKKIATATIATAGFATIAIASGNQAHASEQDNYGYNPNDPTSYSYTYTIDAQGNYHYTWKGNWHPSQLNQDNGYYSYYYYNGYNNYNNYNNGYSYNNYSRYNNYSNNNQSYNYNNYNSYNTNSYRTGGLGASYSTSSNNVQVTTTMAPSSNGRSISSGYTSGRNLYTSGQCTYYVFDRVGGKIGSTWGNASNWANAAARAGYTVNNTPKAGAIMQTTQGAYGHVAYVESVNSNGSVRVSEMNYGYGPGVVTSRTISASQAAGYNFIH</sequence>
<protein>
    <recommendedName>
        <fullName>Staphylococcal secretory antigen ssaA2</fullName>
    </recommendedName>
</protein>
<reference key="1">
    <citation type="journal article" date="2001" name="Lancet">
        <title>Whole genome sequencing of meticillin-resistant Staphylococcus aureus.</title>
        <authorList>
            <person name="Kuroda M."/>
            <person name="Ohta T."/>
            <person name="Uchiyama I."/>
            <person name="Baba T."/>
            <person name="Yuzawa H."/>
            <person name="Kobayashi I."/>
            <person name="Cui L."/>
            <person name="Oguchi A."/>
            <person name="Aoki K."/>
            <person name="Nagai Y."/>
            <person name="Lian J.-Q."/>
            <person name="Ito T."/>
            <person name="Kanamori M."/>
            <person name="Matsumaru H."/>
            <person name="Maruyama A."/>
            <person name="Murakami H."/>
            <person name="Hosoyama A."/>
            <person name="Mizutani-Ui Y."/>
            <person name="Takahashi N.K."/>
            <person name="Sawano T."/>
            <person name="Inoue R."/>
            <person name="Kaito C."/>
            <person name="Sekimizu K."/>
            <person name="Hirakawa H."/>
            <person name="Kuhara S."/>
            <person name="Goto S."/>
            <person name="Yabuzaki J."/>
            <person name="Kanehisa M."/>
            <person name="Yamashita A."/>
            <person name="Oshima K."/>
            <person name="Furuya K."/>
            <person name="Yoshino C."/>
            <person name="Shiba T."/>
            <person name="Hattori M."/>
            <person name="Ogasawara N."/>
            <person name="Hayashi H."/>
            <person name="Hiramatsu K."/>
        </authorList>
    </citation>
    <scope>NUCLEOTIDE SEQUENCE [LARGE SCALE GENOMIC DNA]</scope>
    <source>
        <strain>Mu50 / ATCC 700699</strain>
    </source>
</reference>
<gene>
    <name type="primary">ssaA2</name>
    <name type="ordered locus">SAV2299</name>
</gene>
<dbReference type="EMBL" id="BA000017">
    <property type="protein sequence ID" value="BAB58461.1"/>
    <property type="molecule type" value="Genomic_DNA"/>
</dbReference>
<dbReference type="RefSeq" id="WP_000717381.1">
    <property type="nucleotide sequence ID" value="NC_002758.2"/>
</dbReference>
<dbReference type="SMR" id="Q99RX4"/>
<dbReference type="KEGG" id="sav:SAV2299"/>
<dbReference type="HOGENOM" id="CLU_016043_11_0_9"/>
<dbReference type="Proteomes" id="UP000002481">
    <property type="component" value="Chromosome"/>
</dbReference>
<dbReference type="GO" id="GO:0005576">
    <property type="term" value="C:extracellular region"/>
    <property type="evidence" value="ECO:0007669"/>
    <property type="project" value="UniProtKB-SubCell"/>
</dbReference>
<dbReference type="Gene3D" id="3.90.1720.10">
    <property type="entry name" value="endopeptidase domain like (from Nostoc punctiforme)"/>
    <property type="match status" value="1"/>
</dbReference>
<dbReference type="InterPro" id="IPR007921">
    <property type="entry name" value="CHAP_dom"/>
</dbReference>
<dbReference type="InterPro" id="IPR038765">
    <property type="entry name" value="Papain-like_cys_pep_sf"/>
</dbReference>
<dbReference type="Pfam" id="PF05257">
    <property type="entry name" value="CHAP"/>
    <property type="match status" value="1"/>
</dbReference>
<dbReference type="SUPFAM" id="SSF54001">
    <property type="entry name" value="Cysteine proteinases"/>
    <property type="match status" value="1"/>
</dbReference>
<dbReference type="PROSITE" id="PS50911">
    <property type="entry name" value="CHAP"/>
    <property type="match status" value="1"/>
</dbReference>
<proteinExistence type="inferred from homology"/>
<keyword id="KW-0677">Repeat</keyword>
<keyword id="KW-0964">Secreted</keyword>
<keyword id="KW-0732">Signal</keyword>
<keyword id="KW-0843">Virulence</keyword>
<evidence type="ECO:0000250" key="1"/>
<evidence type="ECO:0000255" key="2"/>
<evidence type="ECO:0000255" key="3">
    <source>
        <dbReference type="PROSITE-ProRule" id="PRU00048"/>
    </source>
</evidence>
<feature type="signal peptide" evidence="2">
    <location>
        <begin position="1"/>
        <end position="27"/>
    </location>
</feature>
<feature type="chain" id="PRO_0000045315" description="Staphylococcal secretory antigen ssaA2">
    <location>
        <begin position="28"/>
        <end position="267"/>
    </location>
</feature>
<feature type="repeat" description="1">
    <location>
        <begin position="83"/>
        <end position="85"/>
    </location>
</feature>
<feature type="repeat" description="2">
    <location>
        <begin position="86"/>
        <end position="88"/>
    </location>
</feature>
<feature type="repeat" description="3">
    <location>
        <begin position="89"/>
        <end position="91"/>
    </location>
</feature>
<feature type="repeat" description="4">
    <location>
        <begin position="95"/>
        <end position="97"/>
    </location>
</feature>
<feature type="repeat" description="5">
    <location>
        <begin position="101"/>
        <end position="103"/>
    </location>
</feature>
<feature type="repeat" description="6">
    <location>
        <begin position="104"/>
        <end position="106"/>
    </location>
</feature>
<feature type="repeat" description="7">
    <location>
        <begin position="113"/>
        <end position="115"/>
    </location>
</feature>
<feature type="domain" description="Peptidase C51" evidence="3">
    <location>
        <begin position="146"/>
        <end position="267"/>
    </location>
</feature>
<feature type="region of interest" description="7 X 3 AA repeats of Y-[NS]-N">
    <location>
        <begin position="83"/>
        <end position="115"/>
    </location>
</feature>
<organism>
    <name type="scientific">Staphylococcus aureus (strain Mu50 / ATCC 700699)</name>
    <dbReference type="NCBI Taxonomy" id="158878"/>
    <lineage>
        <taxon>Bacteria</taxon>
        <taxon>Bacillati</taxon>
        <taxon>Bacillota</taxon>
        <taxon>Bacilli</taxon>
        <taxon>Bacillales</taxon>
        <taxon>Staphylococcaceae</taxon>
        <taxon>Staphylococcus</taxon>
    </lineage>
</organism>